<sequence>MSAPTKPHSPTFKPEPHSAANEPKHPAARPKHVALQQLTGAQAVIRSLEELGVDVIFGIPGGAVLPVYDPLFDSKKLRHVLVRHEQGAGHAASGYAHVTGRVGVCMATSGPGATNLVTPLADAQMDSIPVVAITGQVGRGLIGTDAFQEADISGITMPITKHNFLVRSGDDIPRVLAEAFHIAASGRPGAVLVDIPKDVLQGQCTFSWPPRMELPGYKPNTKPHSRQVREAAKLIAAARKPVLYVGGGVIRGEATEQLRELAELTGIPVVTTLMARGAFPDSHRQNLGMPGMHGTVAAVAALQRSDLLIALGTRFDDRVTGKLDSFAPEAKVIHADIDPAEIGKNRHADVPIVGDVKAVITELIAMLRHHHIPGTIEMADWWAYLNGVRKTYPLSYGPQSDGSLSPEYVIEKLGEIAGPDAVFVAGVGQHQMWAAQFIRYEKPRSWLNSGGLGTMGFAIPAAMGAKIALPGTEVWAIDGDGCFQMTNQELATCAVEGIPVKVALINNGNLGMVRQWQSLFYAERYSQTDLATHSHRIPDFVKLAEALGCVGLRCEREEDVVDVINQARAINDCPVVIDFIVGADAQVWPMVAAGTSNDEIQAARGIRPLFDDITEGHA</sequence>
<keyword id="KW-0028">Amino-acid biosynthesis</keyword>
<keyword id="KW-0100">Branched-chain amino acid biosynthesis</keyword>
<keyword id="KW-0274">FAD</keyword>
<keyword id="KW-0285">Flavoprotein</keyword>
<keyword id="KW-0460">Magnesium</keyword>
<keyword id="KW-0479">Metal-binding</keyword>
<keyword id="KW-1185">Reference proteome</keyword>
<keyword id="KW-0786">Thiamine pyrophosphate</keyword>
<keyword id="KW-0808">Transferase</keyword>
<protein>
    <recommendedName>
        <fullName>Acetolactate synthase</fullName>
        <ecNumber>2.2.1.6</ecNumber>
    </recommendedName>
    <alternativeName>
        <fullName>ALS</fullName>
    </alternativeName>
    <alternativeName>
        <fullName>Acetohydroxy-acid synthase</fullName>
    </alternativeName>
</protein>
<comment type="catalytic activity">
    <reaction>
        <text>2 pyruvate + H(+) = (2S)-2-acetolactate + CO2</text>
        <dbReference type="Rhea" id="RHEA:25249"/>
        <dbReference type="ChEBI" id="CHEBI:15361"/>
        <dbReference type="ChEBI" id="CHEBI:15378"/>
        <dbReference type="ChEBI" id="CHEBI:16526"/>
        <dbReference type="ChEBI" id="CHEBI:58476"/>
        <dbReference type="EC" id="2.2.1.6"/>
    </reaction>
</comment>
<comment type="cofactor">
    <cofactor evidence="1">
        <name>Mg(2+)</name>
        <dbReference type="ChEBI" id="CHEBI:18420"/>
    </cofactor>
    <text evidence="1">Binds 1 Mg(2+) ion per subunit.</text>
</comment>
<comment type="cofactor">
    <cofactor evidence="1">
        <name>thiamine diphosphate</name>
        <dbReference type="ChEBI" id="CHEBI:58937"/>
    </cofactor>
    <text evidence="1">Binds 1 thiamine pyrophosphate per subunit.</text>
</comment>
<comment type="pathway">
    <text>Amino-acid biosynthesis; L-isoleucine biosynthesis; L-isoleucine from 2-oxobutanoate: step 1/4.</text>
</comment>
<comment type="pathway">
    <text>Amino-acid biosynthesis; L-valine biosynthesis; L-valine from pyruvate: step 1/4.</text>
</comment>
<comment type="similarity">
    <text evidence="3">Belongs to the TPP enzyme family.</text>
</comment>
<organism>
    <name type="scientific">Mycobacterium bovis (strain ATCC BAA-935 / AF2122/97)</name>
    <dbReference type="NCBI Taxonomy" id="233413"/>
    <lineage>
        <taxon>Bacteria</taxon>
        <taxon>Bacillati</taxon>
        <taxon>Actinomycetota</taxon>
        <taxon>Actinomycetes</taxon>
        <taxon>Mycobacteriales</taxon>
        <taxon>Mycobacteriaceae</taxon>
        <taxon>Mycobacterium</taxon>
        <taxon>Mycobacterium tuberculosis complex</taxon>
    </lineage>
</organism>
<feature type="chain" id="PRO_0000090801" description="Acetolactate synthase">
    <location>
        <begin position="1"/>
        <end position="618"/>
    </location>
</feature>
<feature type="region of interest" description="Disordered" evidence="2">
    <location>
        <begin position="1"/>
        <end position="30"/>
    </location>
</feature>
<feature type="region of interest" description="Thiamine pyrophosphate binding">
    <location>
        <begin position="429"/>
        <end position="509"/>
    </location>
</feature>
<feature type="binding site" evidence="1">
    <location>
        <position position="85"/>
    </location>
    <ligand>
        <name>thiamine diphosphate</name>
        <dbReference type="ChEBI" id="CHEBI:58937"/>
    </ligand>
</feature>
<feature type="binding site" evidence="1">
    <location>
        <position position="187"/>
    </location>
    <ligand>
        <name>FAD</name>
        <dbReference type="ChEBI" id="CHEBI:57692"/>
    </ligand>
</feature>
<feature type="binding site" evidence="1">
    <location>
        <begin position="293"/>
        <end position="314"/>
    </location>
    <ligand>
        <name>FAD</name>
        <dbReference type="ChEBI" id="CHEBI:57692"/>
    </ligand>
</feature>
<feature type="binding site" evidence="1">
    <location>
        <begin position="336"/>
        <end position="355"/>
    </location>
    <ligand>
        <name>FAD</name>
        <dbReference type="ChEBI" id="CHEBI:57692"/>
    </ligand>
</feature>
<feature type="binding site" evidence="1">
    <location>
        <position position="480"/>
    </location>
    <ligand>
        <name>Mg(2+)</name>
        <dbReference type="ChEBI" id="CHEBI:18420"/>
    </ligand>
</feature>
<feature type="binding site" evidence="1">
    <location>
        <position position="507"/>
    </location>
    <ligand>
        <name>Mg(2+)</name>
        <dbReference type="ChEBI" id="CHEBI:18420"/>
    </ligand>
</feature>
<evidence type="ECO:0000250" key="1"/>
<evidence type="ECO:0000256" key="2">
    <source>
        <dbReference type="SAM" id="MobiDB-lite"/>
    </source>
</evidence>
<evidence type="ECO:0000305" key="3"/>
<name>ILVB_MYCBO</name>
<gene>
    <name type="primary">ilvB</name>
    <name type="ordered locus">BQ2027_MB3028C</name>
</gene>
<accession>P0A623</accession>
<accession>A0A1R3Y2T5</accession>
<accession>O53250</accession>
<accession>X2BN34</accession>
<reference key="1">
    <citation type="journal article" date="2003" name="Proc. Natl. Acad. Sci. U.S.A.">
        <title>The complete genome sequence of Mycobacterium bovis.</title>
        <authorList>
            <person name="Garnier T."/>
            <person name="Eiglmeier K."/>
            <person name="Camus J.-C."/>
            <person name="Medina N."/>
            <person name="Mansoor H."/>
            <person name="Pryor M."/>
            <person name="Duthoy S."/>
            <person name="Grondin S."/>
            <person name="Lacroix C."/>
            <person name="Monsempe C."/>
            <person name="Simon S."/>
            <person name="Harris B."/>
            <person name="Atkin R."/>
            <person name="Doggett J."/>
            <person name="Mayes R."/>
            <person name="Keating L."/>
            <person name="Wheeler P.R."/>
            <person name="Parkhill J."/>
            <person name="Barrell B.G."/>
            <person name="Cole S.T."/>
            <person name="Gordon S.V."/>
            <person name="Hewinson R.G."/>
        </authorList>
    </citation>
    <scope>NUCLEOTIDE SEQUENCE [LARGE SCALE GENOMIC DNA]</scope>
    <source>
        <strain>ATCC BAA-935 / AF2122/97</strain>
    </source>
</reference>
<reference key="2">
    <citation type="journal article" date="2017" name="Genome Announc.">
        <title>Updated reference genome sequence and annotation of Mycobacterium bovis AF2122/97.</title>
        <authorList>
            <person name="Malone K.M."/>
            <person name="Farrell D."/>
            <person name="Stuber T.P."/>
            <person name="Schubert O.T."/>
            <person name="Aebersold R."/>
            <person name="Robbe-Austerman S."/>
            <person name="Gordon S.V."/>
        </authorList>
    </citation>
    <scope>NUCLEOTIDE SEQUENCE [LARGE SCALE GENOMIC DNA]</scope>
    <scope>GENOME REANNOTATION</scope>
    <source>
        <strain>ATCC BAA-935 / AF2122/97</strain>
    </source>
</reference>
<dbReference type="EC" id="2.2.1.6"/>
<dbReference type="EMBL" id="LT708304">
    <property type="protein sequence ID" value="SIU01652.1"/>
    <property type="molecule type" value="Genomic_DNA"/>
</dbReference>
<dbReference type="RefSeq" id="NP_856673.1">
    <property type="nucleotide sequence ID" value="NC_002945.3"/>
</dbReference>
<dbReference type="RefSeq" id="WP_003415168.1">
    <property type="nucleotide sequence ID" value="NC_002945.4"/>
</dbReference>
<dbReference type="SMR" id="P0A623"/>
<dbReference type="KEGG" id="mbo:BQ2027_MB3028C"/>
<dbReference type="PATRIC" id="fig|233413.5.peg.3328"/>
<dbReference type="UniPathway" id="UPA00047">
    <property type="reaction ID" value="UER00055"/>
</dbReference>
<dbReference type="UniPathway" id="UPA00049">
    <property type="reaction ID" value="UER00059"/>
</dbReference>
<dbReference type="Proteomes" id="UP000001419">
    <property type="component" value="Chromosome"/>
</dbReference>
<dbReference type="GO" id="GO:0005948">
    <property type="term" value="C:acetolactate synthase complex"/>
    <property type="evidence" value="ECO:0007669"/>
    <property type="project" value="TreeGrafter"/>
</dbReference>
<dbReference type="GO" id="GO:0003984">
    <property type="term" value="F:acetolactate synthase activity"/>
    <property type="evidence" value="ECO:0007669"/>
    <property type="project" value="UniProtKB-EC"/>
</dbReference>
<dbReference type="GO" id="GO:0050660">
    <property type="term" value="F:flavin adenine dinucleotide binding"/>
    <property type="evidence" value="ECO:0007669"/>
    <property type="project" value="InterPro"/>
</dbReference>
<dbReference type="GO" id="GO:0000287">
    <property type="term" value="F:magnesium ion binding"/>
    <property type="evidence" value="ECO:0007669"/>
    <property type="project" value="InterPro"/>
</dbReference>
<dbReference type="GO" id="GO:0030976">
    <property type="term" value="F:thiamine pyrophosphate binding"/>
    <property type="evidence" value="ECO:0007669"/>
    <property type="project" value="InterPro"/>
</dbReference>
<dbReference type="GO" id="GO:0009097">
    <property type="term" value="P:isoleucine biosynthetic process"/>
    <property type="evidence" value="ECO:0007669"/>
    <property type="project" value="UniProtKB-UniPathway"/>
</dbReference>
<dbReference type="GO" id="GO:0009099">
    <property type="term" value="P:L-valine biosynthetic process"/>
    <property type="evidence" value="ECO:0007669"/>
    <property type="project" value="UniProtKB-UniPathway"/>
</dbReference>
<dbReference type="CDD" id="cd02015">
    <property type="entry name" value="TPP_AHAS"/>
    <property type="match status" value="1"/>
</dbReference>
<dbReference type="CDD" id="cd07035">
    <property type="entry name" value="TPP_PYR_POX_like"/>
    <property type="match status" value="1"/>
</dbReference>
<dbReference type="FunFam" id="3.40.50.1220:FF:000008">
    <property type="entry name" value="Acetolactate synthase"/>
    <property type="match status" value="1"/>
</dbReference>
<dbReference type="FunFam" id="3.40.50.970:FF:000007">
    <property type="entry name" value="Acetolactate synthase"/>
    <property type="match status" value="1"/>
</dbReference>
<dbReference type="FunFam" id="3.40.50.970:FF:000016">
    <property type="entry name" value="Acetolactate synthase"/>
    <property type="match status" value="1"/>
</dbReference>
<dbReference type="Gene3D" id="3.40.50.970">
    <property type="match status" value="2"/>
</dbReference>
<dbReference type="Gene3D" id="3.40.50.1220">
    <property type="entry name" value="TPP-binding domain"/>
    <property type="match status" value="1"/>
</dbReference>
<dbReference type="InterPro" id="IPR012846">
    <property type="entry name" value="Acetolactate_synth_lsu"/>
</dbReference>
<dbReference type="InterPro" id="IPR039368">
    <property type="entry name" value="AHAS_TPP"/>
</dbReference>
<dbReference type="InterPro" id="IPR029035">
    <property type="entry name" value="DHS-like_NAD/FAD-binding_dom"/>
</dbReference>
<dbReference type="InterPro" id="IPR029061">
    <property type="entry name" value="THDP-binding"/>
</dbReference>
<dbReference type="InterPro" id="IPR012000">
    <property type="entry name" value="Thiamin_PyroP_enz_cen_dom"/>
</dbReference>
<dbReference type="InterPro" id="IPR012001">
    <property type="entry name" value="Thiamin_PyroP_enz_TPP-bd_dom"/>
</dbReference>
<dbReference type="InterPro" id="IPR000399">
    <property type="entry name" value="TPP-bd_CS"/>
</dbReference>
<dbReference type="InterPro" id="IPR045229">
    <property type="entry name" value="TPP_enz"/>
</dbReference>
<dbReference type="InterPro" id="IPR011766">
    <property type="entry name" value="TPP_enzyme_TPP-bd"/>
</dbReference>
<dbReference type="NCBIfam" id="TIGR00118">
    <property type="entry name" value="acolac_lg"/>
    <property type="match status" value="1"/>
</dbReference>
<dbReference type="NCBIfam" id="NF005860">
    <property type="entry name" value="PRK07789.1"/>
    <property type="match status" value="1"/>
</dbReference>
<dbReference type="PANTHER" id="PTHR18968:SF13">
    <property type="entry name" value="ACETOLACTATE SYNTHASE CATALYTIC SUBUNIT, MITOCHONDRIAL"/>
    <property type="match status" value="1"/>
</dbReference>
<dbReference type="PANTHER" id="PTHR18968">
    <property type="entry name" value="THIAMINE PYROPHOSPHATE ENZYMES"/>
    <property type="match status" value="1"/>
</dbReference>
<dbReference type="Pfam" id="PF02775">
    <property type="entry name" value="TPP_enzyme_C"/>
    <property type="match status" value="1"/>
</dbReference>
<dbReference type="Pfam" id="PF00205">
    <property type="entry name" value="TPP_enzyme_M"/>
    <property type="match status" value="1"/>
</dbReference>
<dbReference type="Pfam" id="PF02776">
    <property type="entry name" value="TPP_enzyme_N"/>
    <property type="match status" value="1"/>
</dbReference>
<dbReference type="SUPFAM" id="SSF52467">
    <property type="entry name" value="DHS-like NAD/FAD-binding domain"/>
    <property type="match status" value="1"/>
</dbReference>
<dbReference type="SUPFAM" id="SSF52518">
    <property type="entry name" value="Thiamin diphosphate-binding fold (THDP-binding)"/>
    <property type="match status" value="2"/>
</dbReference>
<dbReference type="PROSITE" id="PS00187">
    <property type="entry name" value="TPP_ENZYMES"/>
    <property type="match status" value="1"/>
</dbReference>
<proteinExistence type="inferred from homology"/>